<protein>
    <recommendedName>
        <fullName>Prokineticin Bm8-a</fullName>
    </recommendedName>
    <alternativeName>
        <fullName>Prokineticin Bv8-like peptide 1</fullName>
        <shortName>Bv8-LP1</shortName>
    </alternativeName>
</protein>
<accession>Q8JFE6</accession>
<sequence>MKCFAQIVVLLLVIAFSHGAVITGVCDRDAQCGSGTCCAASAFSRNIRFCVPLGNNGEECHPASHKVPYNGKRLSSLCPCNTGLTCSKSGEKFQCS</sequence>
<keyword id="KW-0903">Direct protein sequencing</keyword>
<keyword id="KW-1015">Disulfide bond</keyword>
<keyword id="KW-1213">G-protein coupled receptor impairing toxin</keyword>
<keyword id="KW-0964">Secreted</keyword>
<keyword id="KW-0732">Signal</keyword>
<keyword id="KW-0800">Toxin</keyword>
<reference key="1">
    <citation type="journal article" date="2003" name="Biochem. J.">
        <title>Granular gland transcriptomes in stimulated amphibian skin secretions.</title>
        <authorList>
            <person name="Chen T."/>
            <person name="Farragher S.M."/>
            <person name="Bjourson A.J."/>
            <person name="Orr D.F."/>
            <person name="Rao P."/>
            <person name="Shaw C."/>
        </authorList>
    </citation>
    <scope>NUCLEOTIDE SEQUENCE [MRNA]</scope>
    <source>
        <tissue>Skin secretion</tissue>
    </source>
</reference>
<reference key="2">
    <citation type="journal article" date="2003" name="Comp. Biochem. Physiol.">
        <title>Two novel Bv8-like peptides from skin secretions of the toad Bombina maxima.</title>
        <authorList>
            <person name="Lai R."/>
            <person name="Liu H."/>
            <person name="Lee W.H."/>
            <person name="Zhang Y."/>
        </authorList>
    </citation>
    <scope>NUCLEOTIDE SEQUENCE [MRNA]</scope>
    <scope>PROTEIN SEQUENCE OF 20-42</scope>
    <source>
        <tissue>Skin secretion</tissue>
    </source>
</reference>
<dbReference type="EMBL" id="AJ440230">
    <property type="protein sequence ID" value="CAD29340.1"/>
    <property type="molecule type" value="mRNA"/>
</dbReference>
<dbReference type="EMBL" id="AF411090">
    <property type="protein sequence ID" value="AAN03821.1"/>
    <property type="molecule type" value="mRNA"/>
</dbReference>
<dbReference type="SMR" id="Q8JFE6"/>
<dbReference type="GO" id="GO:0005576">
    <property type="term" value="C:extracellular region"/>
    <property type="evidence" value="ECO:0007669"/>
    <property type="project" value="UniProtKB-SubCell"/>
</dbReference>
<dbReference type="GO" id="GO:0090729">
    <property type="term" value="F:toxin activity"/>
    <property type="evidence" value="ECO:0007669"/>
    <property type="project" value="UniProtKB-KW"/>
</dbReference>
<dbReference type="GO" id="GO:0001935">
    <property type="term" value="P:endothelial cell proliferation"/>
    <property type="evidence" value="ECO:0007669"/>
    <property type="project" value="TreeGrafter"/>
</dbReference>
<dbReference type="Gene3D" id="2.10.80.10">
    <property type="entry name" value="Lipase, subunit A"/>
    <property type="match status" value="1"/>
</dbReference>
<dbReference type="InterPro" id="IPR009523">
    <property type="entry name" value="Prokineticin"/>
</dbReference>
<dbReference type="InterPro" id="IPR023569">
    <property type="entry name" value="Prokineticin_domain"/>
</dbReference>
<dbReference type="PANTHER" id="PTHR18821">
    <property type="entry name" value="PROKINETICIN"/>
    <property type="match status" value="1"/>
</dbReference>
<dbReference type="PANTHER" id="PTHR18821:SF7">
    <property type="entry name" value="PROKINETICIN-1"/>
    <property type="match status" value="1"/>
</dbReference>
<dbReference type="Pfam" id="PF06607">
    <property type="entry name" value="Prokineticin"/>
    <property type="match status" value="1"/>
</dbReference>
<dbReference type="SUPFAM" id="SSF57190">
    <property type="entry name" value="Colipase-like"/>
    <property type="match status" value="2"/>
</dbReference>
<proteinExistence type="evidence at protein level"/>
<feature type="signal peptide" evidence="2">
    <location>
        <begin position="1"/>
        <end position="19"/>
    </location>
</feature>
<feature type="chain" id="PRO_0000265771" description="Prokineticin Bm8-a">
    <location>
        <begin position="20"/>
        <end position="96"/>
    </location>
</feature>
<feature type="disulfide bond" evidence="1">
    <location>
        <begin position="26"/>
        <end position="38"/>
    </location>
</feature>
<feature type="disulfide bond" evidence="1">
    <location>
        <begin position="32"/>
        <end position="50"/>
    </location>
</feature>
<feature type="disulfide bond" evidence="1">
    <location>
        <begin position="37"/>
        <end position="78"/>
    </location>
</feature>
<feature type="disulfide bond" evidence="1">
    <location>
        <begin position="60"/>
        <end position="86"/>
    </location>
</feature>
<feature type="disulfide bond" evidence="1">
    <location>
        <begin position="80"/>
        <end position="95"/>
    </location>
</feature>
<evidence type="ECO:0000250" key="1">
    <source>
        <dbReference type="UniProtKB" id="Q9PW66"/>
    </source>
</evidence>
<evidence type="ECO:0000269" key="2">
    <source>
    </source>
</evidence>
<evidence type="ECO:0000305" key="3"/>
<comment type="function">
    <text evidence="1">Potent agonist for both PKR1/PROKR1 and PKR2/PROKR2, and inducer of a potent and long-lasting hyperalgesia. Also potentiates capsaicin-induced TRPV1 current, when tested on DRG neurons. At subnanomolar concentrations, this protein both induces potent chemotaxis of macrophages and stimulates LPS-induced production of the pro-inflammatory cytokines IL-1 and IL-12. In vivo, potently stimulates the contraction of the guinea-pig gastrointestinal (GI) smooth muscle (nanomolar concentration).</text>
</comment>
<comment type="subcellular location">
    <subcellularLocation>
        <location>Secreted</location>
    </subcellularLocation>
</comment>
<comment type="tissue specificity">
    <text>Expressed by the skin glands.</text>
</comment>
<comment type="similarity">
    <text evidence="3">Belongs to the AVIT (prokineticin) family.</text>
</comment>
<name>BM8A_BOMMX</name>
<organism>
    <name type="scientific">Bombina maxima</name>
    <name type="common">Giant fire-bellied toad</name>
    <name type="synonym">Chinese red belly toad</name>
    <dbReference type="NCBI Taxonomy" id="161274"/>
    <lineage>
        <taxon>Eukaryota</taxon>
        <taxon>Metazoa</taxon>
        <taxon>Chordata</taxon>
        <taxon>Craniata</taxon>
        <taxon>Vertebrata</taxon>
        <taxon>Euteleostomi</taxon>
        <taxon>Amphibia</taxon>
        <taxon>Batrachia</taxon>
        <taxon>Anura</taxon>
        <taxon>Bombinatoridae</taxon>
        <taxon>Bombina</taxon>
    </lineage>
</organism>